<keyword id="KW-0520">NAD</keyword>
<keyword id="KW-0560">Oxidoreductase</keyword>
<protein>
    <recommendedName>
        <fullName evidence="1">Altronate oxidoreductase</fullName>
        <ecNumber evidence="1">1.1.1.58</ecNumber>
    </recommendedName>
    <alternativeName>
        <fullName evidence="1">Tagaturonate dehydrogenase</fullName>
    </alternativeName>
    <alternativeName>
        <fullName evidence="1">Tagaturonate reductase</fullName>
    </alternativeName>
</protein>
<name>UXAB_ECOBW</name>
<reference key="1">
    <citation type="journal article" date="2009" name="J. Bacteriol.">
        <title>Genomic sequencing reveals regulatory mutations and recombinational events in the widely used MC4100 lineage of Escherichia coli K-12.</title>
        <authorList>
            <person name="Ferenci T."/>
            <person name="Zhou Z."/>
            <person name="Betteridge T."/>
            <person name="Ren Y."/>
            <person name="Liu Y."/>
            <person name="Feng L."/>
            <person name="Reeves P.R."/>
            <person name="Wang L."/>
        </authorList>
    </citation>
    <scope>NUCLEOTIDE SEQUENCE [LARGE SCALE GENOMIC DNA]</scope>
    <source>
        <strain>K12 / MC4100 / BW2952</strain>
    </source>
</reference>
<feature type="chain" id="PRO_1000212505" description="Altronate oxidoreductase">
    <location>
        <begin position="1"/>
        <end position="483"/>
    </location>
</feature>
<feature type="binding site" evidence="1">
    <location>
        <begin position="18"/>
        <end position="29"/>
    </location>
    <ligand>
        <name>NAD(+)</name>
        <dbReference type="ChEBI" id="CHEBI:57540"/>
    </ligand>
</feature>
<gene>
    <name evidence="1" type="primary">uxaB</name>
    <name type="ordered locus">BWG_1340</name>
</gene>
<organism>
    <name type="scientific">Escherichia coli (strain K12 / MC4100 / BW2952)</name>
    <dbReference type="NCBI Taxonomy" id="595496"/>
    <lineage>
        <taxon>Bacteria</taxon>
        <taxon>Pseudomonadati</taxon>
        <taxon>Pseudomonadota</taxon>
        <taxon>Gammaproteobacteria</taxon>
        <taxon>Enterobacterales</taxon>
        <taxon>Enterobacteriaceae</taxon>
        <taxon>Escherichia</taxon>
    </lineage>
</organism>
<dbReference type="EC" id="1.1.1.58" evidence="1"/>
<dbReference type="EMBL" id="CP001396">
    <property type="protein sequence ID" value="ACR61971.1"/>
    <property type="molecule type" value="Genomic_DNA"/>
</dbReference>
<dbReference type="RefSeq" id="WP_000854633.1">
    <property type="nucleotide sequence ID" value="NC_012759.1"/>
</dbReference>
<dbReference type="SMR" id="C4ZWT8"/>
<dbReference type="KEGG" id="ebw:BWG_1340"/>
<dbReference type="HOGENOM" id="CLU_027324_1_0_6"/>
<dbReference type="UniPathway" id="UPA00246"/>
<dbReference type="GO" id="GO:0005829">
    <property type="term" value="C:cytosol"/>
    <property type="evidence" value="ECO:0007669"/>
    <property type="project" value="TreeGrafter"/>
</dbReference>
<dbReference type="GO" id="GO:0008926">
    <property type="term" value="F:mannitol-1-phosphate 5-dehydrogenase activity"/>
    <property type="evidence" value="ECO:0007669"/>
    <property type="project" value="TreeGrafter"/>
</dbReference>
<dbReference type="GO" id="GO:0009026">
    <property type="term" value="F:tagaturonate reductase activity"/>
    <property type="evidence" value="ECO:0007669"/>
    <property type="project" value="UniProtKB-UniRule"/>
</dbReference>
<dbReference type="GO" id="GO:0019698">
    <property type="term" value="P:D-galacturonate catabolic process"/>
    <property type="evidence" value="ECO:0007669"/>
    <property type="project" value="TreeGrafter"/>
</dbReference>
<dbReference type="GO" id="GO:0019592">
    <property type="term" value="P:mannitol catabolic process"/>
    <property type="evidence" value="ECO:0007669"/>
    <property type="project" value="TreeGrafter"/>
</dbReference>
<dbReference type="FunFam" id="1.10.1040.10:FF:000018">
    <property type="entry name" value="Altronate oxidoreductase"/>
    <property type="match status" value="1"/>
</dbReference>
<dbReference type="FunFam" id="3.40.50.720:FF:000153">
    <property type="entry name" value="Altronate oxidoreductase"/>
    <property type="match status" value="1"/>
</dbReference>
<dbReference type="Gene3D" id="1.10.1040.10">
    <property type="entry name" value="N-(1-d-carboxylethyl)-l-norvaline Dehydrogenase, domain 2"/>
    <property type="match status" value="1"/>
</dbReference>
<dbReference type="Gene3D" id="3.40.50.720">
    <property type="entry name" value="NAD(P)-binding Rossmann-like Domain"/>
    <property type="match status" value="1"/>
</dbReference>
<dbReference type="HAMAP" id="MF_00670">
    <property type="entry name" value="Altron_oxidoreduct"/>
    <property type="match status" value="1"/>
</dbReference>
<dbReference type="InterPro" id="IPR008927">
    <property type="entry name" value="6-PGluconate_DH-like_C_sf"/>
</dbReference>
<dbReference type="InterPro" id="IPR013328">
    <property type="entry name" value="6PGD_dom2"/>
</dbReference>
<dbReference type="InterPro" id="IPR023668">
    <property type="entry name" value="Altronate_OxRdtase"/>
</dbReference>
<dbReference type="InterPro" id="IPR013118">
    <property type="entry name" value="Mannitol_DH_C"/>
</dbReference>
<dbReference type="InterPro" id="IPR013131">
    <property type="entry name" value="Mannitol_DH_N"/>
</dbReference>
<dbReference type="InterPro" id="IPR036291">
    <property type="entry name" value="NAD(P)-bd_dom_sf"/>
</dbReference>
<dbReference type="NCBIfam" id="NF002969">
    <property type="entry name" value="PRK03643.1"/>
    <property type="match status" value="1"/>
</dbReference>
<dbReference type="PANTHER" id="PTHR30524:SF0">
    <property type="entry name" value="ALTRONATE OXIDOREDUCTASE-RELATED"/>
    <property type="match status" value="1"/>
</dbReference>
<dbReference type="PANTHER" id="PTHR30524">
    <property type="entry name" value="MANNITOL-1-PHOSPHATE 5-DEHYDROGENASE"/>
    <property type="match status" value="1"/>
</dbReference>
<dbReference type="Pfam" id="PF01232">
    <property type="entry name" value="Mannitol_dh"/>
    <property type="match status" value="1"/>
</dbReference>
<dbReference type="Pfam" id="PF08125">
    <property type="entry name" value="Mannitol_dh_C"/>
    <property type="match status" value="1"/>
</dbReference>
<dbReference type="SUPFAM" id="SSF48179">
    <property type="entry name" value="6-phosphogluconate dehydrogenase C-terminal domain-like"/>
    <property type="match status" value="1"/>
</dbReference>
<dbReference type="SUPFAM" id="SSF51735">
    <property type="entry name" value="NAD(P)-binding Rossmann-fold domains"/>
    <property type="match status" value="1"/>
</dbReference>
<sequence>MKTLNRRDFPGAQYPERIIQFGEGNFLRAFVDWQIDLLNEHTDLNSGVVVVRPIETSFPPSLSTQDGLYTTIIRGLNEKGEAVSDARLIRSVNREISVYSEYDEFLKLAHNPEMRFVFSNTTEAGISYHAGDKFDDAPAVSYPAKLTRLLFERFSHFNGALDKGWIIIPCELIDYNGDALRELVLRYAQEWALPEAFIQWLDQANSFCSTLVDRIVTGYPRDEVAKLEEELGYHDGFLDTAEHFYLFVIQGPKSLATELRLDKYPLNVLIVDDIKPYKERKVAILNGAHTALVPVAFQAGLDTVGEAMNDAEICAFVEKAIYEEIIPVLDLPRDELESFASAVTGRFRNPYIKHQLLSIALNGMTKFRTRILPQLLAGQKANGTLPARLTFALAALIAFYRGERNGETYPVQDDAHWLERYQQLWSQHRDRVIGTQELVAIVLAEKDHWEQDLTQVPGLVEQVANDLDAILEKGMREAVRPLC</sequence>
<evidence type="ECO:0000255" key="1">
    <source>
        <dbReference type="HAMAP-Rule" id="MF_00670"/>
    </source>
</evidence>
<accession>C4ZWT8</accession>
<comment type="catalytic activity">
    <reaction evidence="1">
        <text>D-altronate + NAD(+) = keto-D-tagaturonate + NADH + H(+)</text>
        <dbReference type="Rhea" id="RHEA:17813"/>
        <dbReference type="ChEBI" id="CHEBI:15378"/>
        <dbReference type="ChEBI" id="CHEBI:17360"/>
        <dbReference type="ChEBI" id="CHEBI:17886"/>
        <dbReference type="ChEBI" id="CHEBI:57540"/>
        <dbReference type="ChEBI" id="CHEBI:57945"/>
        <dbReference type="EC" id="1.1.1.58"/>
    </reaction>
</comment>
<comment type="pathway">
    <text evidence="1">Carbohydrate metabolism; pentose and glucuronate interconversion.</text>
</comment>
<comment type="similarity">
    <text evidence="1">Belongs to the mannitol dehydrogenase family. UxaB subfamily.</text>
</comment>
<proteinExistence type="inferred from homology"/>